<sequence length="775" mass="86526">MEQVEILRRFIQRVQAMKSPDHNGEDNFARDFMRLRRLSTKYRTEKIYPTATGEKEENVKKNRYKDILPFDHSRVKLTLKTPSQDSDYINANFIKGVYGPKAYVATQGPLANTVIDFWRMIWEYNVVIIVMACREFEMGRKKCERYWPLYGEDPITFAPFKISCENEQARTDYFIRTLLLEFQNESRRLYQFHYVNWPDHDVPSSFDSILDMISLMRKYQEHEDVPICIHCSAGCGRTGAICAIDYTWNLLKAGKIPEEFNVFNLIQEMRTQRHSAVQTKEQYELVHRAIAQLFEKQLQLYEIHGAQKIADGNEITTGTMVSSIDSEKQDSPPPKPPRTRSCLVEGDAKEEILQPPEPHPVPPILTPSPPSAFPTVTTVWQDSDRYHPKPVLHMASPEQHPADLNRSYDKSADPMGKSESAIEHIDKKLERNLSFEIKKVPLQEGPKSFDGNTLLNRGHAIKIKSASSSVVDRTSKPQELSAGALKVDDVSQNSCADCSAAHSHRAAESSEESQSNSHTPPRPDCLPLDKKGHVTWSLHGPENATPVPDSPDGKSPDNHSQTLKTVSSTPNSTAEEEAHDLTEHHNSSPLLKAPLSFTNPLHSDDSDSDGGSSDGAVTRNKTSISTASATVSPASSAESACTRRVLPMSIARQEVAGTPHSGAEKDADVSEESPPPLPERTPESFVLADMPVRPEWHELPNQEWSEQRESEGLTTSGNEKHDAGGIHTEASADSPPAFSDKKDQITKSPAEVTDIGFGNRCGKPKGPREPPSEWT</sequence>
<organism>
    <name type="scientific">Mus musculus</name>
    <name type="common">Mouse</name>
    <dbReference type="NCBI Taxonomy" id="10090"/>
    <lineage>
        <taxon>Eukaryota</taxon>
        <taxon>Metazoa</taxon>
        <taxon>Chordata</taxon>
        <taxon>Craniata</taxon>
        <taxon>Vertebrata</taxon>
        <taxon>Euteleostomi</taxon>
        <taxon>Mammalia</taxon>
        <taxon>Eutheria</taxon>
        <taxon>Euarchontoglires</taxon>
        <taxon>Glires</taxon>
        <taxon>Rodentia</taxon>
        <taxon>Myomorpha</taxon>
        <taxon>Muroidea</taxon>
        <taxon>Muridae</taxon>
        <taxon>Murinae</taxon>
        <taxon>Mus</taxon>
        <taxon>Mus</taxon>
    </lineage>
</organism>
<gene>
    <name type="primary">Ptpn12</name>
</gene>
<comment type="function">
    <text evidence="2 10">Dephosphorylates a range of proteins, and thereby regulates cellular signaling cascades (PubMed:17070019). Dephosphorylates cellular tyrosine kinases, such as ERBB2 and PTK2B/PYK2, and thereby regulates signaling via ERBB2 and PTK2B/PYK2. Selectively dephosphorylates ERBB2 phosphorylated at 'Tyr-1112', 'Tyr-1196', and/or 'Tyr-1248' (By similarity).</text>
</comment>
<comment type="catalytic activity">
    <reaction evidence="4 11">
        <text>O-phospho-L-tyrosyl-[protein] + H2O = L-tyrosyl-[protein] + phosphate</text>
        <dbReference type="Rhea" id="RHEA:10684"/>
        <dbReference type="Rhea" id="RHEA-COMP:10136"/>
        <dbReference type="Rhea" id="RHEA-COMP:20101"/>
        <dbReference type="ChEBI" id="CHEBI:15377"/>
        <dbReference type="ChEBI" id="CHEBI:43474"/>
        <dbReference type="ChEBI" id="CHEBI:46858"/>
        <dbReference type="ChEBI" id="CHEBI:61978"/>
        <dbReference type="EC" id="3.1.3.48"/>
    </reaction>
</comment>
<comment type="subunit">
    <text evidence="2 6 7 8 9">Interacts with PSTPIP1 and TGFB1I1 (PubMed:10092676, PubMed:11711533). Interacts with PTK2B/PYK2 (PubMed:12674328). Interacts with LPXN (PubMed:12674328, PubMed:15786712). Interacts with SORBS2; this interaction greatly enhances WASF1 dephosphorylation and might mediate partial translocation to focal adhesion sites (By similarity).</text>
</comment>
<comment type="interaction">
    <interactant intactId="EBI-2642957">
        <id>P35831</id>
    </interactant>
    <interactant intactId="EBI-7484574">
        <id>P97814</id>
        <label>Pstpip1</label>
    </interactant>
    <organismsDiffer>false</organismsDiffer>
    <experiments>5</experiments>
</comment>
<comment type="interaction">
    <interactant intactId="EBI-2642957">
        <id>P35831</id>
    </interactant>
    <interactant intactId="EBI-300201">
        <id>P98083</id>
        <label>Shc1</label>
    </interactant>
    <organismsDiffer>false</organismsDiffer>
    <experiments>2</experiments>
</comment>
<comment type="subcellular location">
    <subcellularLocation>
        <location evidence="8 11">Cytoplasm</location>
    </subcellularLocation>
    <subcellularLocation>
        <location evidence="2">Cell junction</location>
        <location evidence="2">Focal adhesion</location>
    </subcellularLocation>
    <subcellularLocation>
        <location evidence="8">Cell projection</location>
        <location evidence="8">Podosome</location>
    </subcellularLocation>
    <text evidence="2">Partial translocation to focal adhesion sites might be mediated by interaction with SORBS2.</text>
</comment>
<comment type="PTM">
    <text evidence="2">Phosphorylated by STK24/MST3 and this results in inhibition of its activity.</text>
</comment>
<comment type="disruption phenotype">
    <text evidence="10">Complete embryonic lethality at 9.5 to 10.5 dpc. Heterozygous mice have no obvious phenotype.</text>
</comment>
<comment type="similarity">
    <text evidence="12">Belongs to the protein-tyrosine phosphatase family. Non-receptor class 4 subfamily.</text>
</comment>
<proteinExistence type="evidence at protein level"/>
<keyword id="KW-0007">Acetylation</keyword>
<keyword id="KW-0965">Cell junction</keyword>
<keyword id="KW-0966">Cell projection</keyword>
<keyword id="KW-0963">Cytoplasm</keyword>
<keyword id="KW-0378">Hydrolase</keyword>
<keyword id="KW-0597">Phosphoprotein</keyword>
<keyword id="KW-0904">Protein phosphatase</keyword>
<keyword id="KW-1185">Reference proteome</keyword>
<accession>P35831</accession>
<accession>Q80UM4</accession>
<name>PTN12_MOUSE</name>
<protein>
    <recommendedName>
        <fullName>Tyrosine-protein phosphatase non-receptor type 12</fullName>
        <ecNumber evidence="11">3.1.3.48</ecNumber>
    </recommendedName>
    <alternativeName>
        <fullName>MPTP-PEST</fullName>
    </alternativeName>
    <alternativeName>
        <fullName>Protein-tyrosine phosphatase P19</fullName>
        <shortName>P19-PTP</shortName>
    </alternativeName>
</protein>
<dbReference type="EC" id="3.1.3.48" evidence="11"/>
<dbReference type="EMBL" id="X63440">
    <property type="protein sequence ID" value="CAA45037.1"/>
    <property type="status" value="ALT_SEQ"/>
    <property type="molecule type" value="mRNA"/>
</dbReference>
<dbReference type="EMBL" id="X86781">
    <property type="protein sequence ID" value="CAA60477.1"/>
    <property type="molecule type" value="Genomic_DNA"/>
</dbReference>
<dbReference type="EMBL" id="AK154107">
    <property type="protein sequence ID" value="BAE32381.1"/>
    <property type="molecule type" value="mRNA"/>
</dbReference>
<dbReference type="EMBL" id="CH466586">
    <property type="protein sequence ID" value="EDL03216.1"/>
    <property type="molecule type" value="Genomic_DNA"/>
</dbReference>
<dbReference type="EMBL" id="BC051980">
    <property type="protein sequence ID" value="AAH51980.1"/>
    <property type="molecule type" value="mRNA"/>
</dbReference>
<dbReference type="CCDS" id="CCDS19102.1"/>
<dbReference type="PIR" id="JH0609">
    <property type="entry name" value="JH0609"/>
</dbReference>
<dbReference type="PIR" id="S55345">
    <property type="entry name" value="S55345"/>
</dbReference>
<dbReference type="RefSeq" id="NP_035333.2">
    <property type="nucleotide sequence ID" value="NM_011203.2"/>
</dbReference>
<dbReference type="SMR" id="P35831"/>
<dbReference type="BioGRID" id="202478">
    <property type="interactions" value="7"/>
</dbReference>
<dbReference type="FunCoup" id="P35831">
    <property type="interactions" value="4018"/>
</dbReference>
<dbReference type="IntAct" id="P35831">
    <property type="interactions" value="4"/>
</dbReference>
<dbReference type="MINT" id="P35831"/>
<dbReference type="STRING" id="10090.ENSMUSP00000030556"/>
<dbReference type="GlyGen" id="P35831">
    <property type="glycosylation" value="4 sites, 3 N-linked glycans (3 sites), 1 O-linked glycan (1 site)"/>
</dbReference>
<dbReference type="iPTMnet" id="P35831"/>
<dbReference type="PhosphoSitePlus" id="P35831"/>
<dbReference type="SwissPalm" id="P35831"/>
<dbReference type="jPOST" id="P35831"/>
<dbReference type="PaxDb" id="10090-ENSMUSP00000030556"/>
<dbReference type="PeptideAtlas" id="P35831"/>
<dbReference type="ProteomicsDB" id="301872"/>
<dbReference type="Pumba" id="P35831"/>
<dbReference type="Antibodypedia" id="2052">
    <property type="antibodies" value="218 antibodies from 33 providers"/>
</dbReference>
<dbReference type="DNASU" id="19248"/>
<dbReference type="Ensembl" id="ENSMUST00000030556.8">
    <property type="protein sequence ID" value="ENSMUSP00000030556.8"/>
    <property type="gene ID" value="ENSMUSG00000028771.14"/>
</dbReference>
<dbReference type="GeneID" id="19248"/>
<dbReference type="KEGG" id="mmu:19248"/>
<dbReference type="UCSC" id="uc008woh.1">
    <property type="organism name" value="mouse"/>
</dbReference>
<dbReference type="AGR" id="MGI:104673"/>
<dbReference type="CTD" id="5782"/>
<dbReference type="MGI" id="MGI:104673">
    <property type="gene designation" value="Ptpn12"/>
</dbReference>
<dbReference type="VEuPathDB" id="HostDB:ENSMUSG00000028771"/>
<dbReference type="eggNOG" id="KOG0789">
    <property type="taxonomic scope" value="Eukaryota"/>
</dbReference>
<dbReference type="GeneTree" id="ENSGT00940000156909"/>
<dbReference type="HOGENOM" id="CLU_015557_2_0_1"/>
<dbReference type="InParanoid" id="P35831"/>
<dbReference type="OMA" id="PCIIDKI"/>
<dbReference type="OrthoDB" id="10253954at2759"/>
<dbReference type="PhylomeDB" id="P35831"/>
<dbReference type="TreeFam" id="TF351977"/>
<dbReference type="Reactome" id="R-MMU-1250196">
    <property type="pathway name" value="SHC1 events in ERBB2 signaling"/>
</dbReference>
<dbReference type="Reactome" id="R-MMU-182971">
    <property type="pathway name" value="EGFR downregulation"/>
</dbReference>
<dbReference type="Reactome" id="R-MMU-186797">
    <property type="pathway name" value="Signaling by PDGF"/>
</dbReference>
<dbReference type="Reactome" id="R-MMU-8863795">
    <property type="pathway name" value="Downregulation of ERBB2 signaling"/>
</dbReference>
<dbReference type="BioGRID-ORCS" id="19248">
    <property type="hits" value="6 hits in 80 CRISPR screens"/>
</dbReference>
<dbReference type="ChiTaRS" id="Ptpn12">
    <property type="organism name" value="mouse"/>
</dbReference>
<dbReference type="PRO" id="PR:P35831"/>
<dbReference type="Proteomes" id="UP000000589">
    <property type="component" value="Chromosome 5"/>
</dbReference>
<dbReference type="RNAct" id="P35831">
    <property type="molecule type" value="protein"/>
</dbReference>
<dbReference type="Bgee" id="ENSMUSG00000028771">
    <property type="expression patterns" value="Expressed in embryonic post-anal tail and 258 other cell types or tissues"/>
</dbReference>
<dbReference type="ExpressionAtlas" id="P35831">
    <property type="expression patterns" value="baseline and differential"/>
</dbReference>
<dbReference type="GO" id="GO:0042995">
    <property type="term" value="C:cell projection"/>
    <property type="evidence" value="ECO:0007669"/>
    <property type="project" value="UniProtKB-KW"/>
</dbReference>
<dbReference type="GO" id="GO:0005829">
    <property type="term" value="C:cytosol"/>
    <property type="evidence" value="ECO:0000314"/>
    <property type="project" value="MGI"/>
</dbReference>
<dbReference type="GO" id="GO:0005925">
    <property type="term" value="C:focal adhesion"/>
    <property type="evidence" value="ECO:0007669"/>
    <property type="project" value="UniProtKB-SubCell"/>
</dbReference>
<dbReference type="GO" id="GO:0002102">
    <property type="term" value="C:podosome"/>
    <property type="evidence" value="ECO:0000314"/>
    <property type="project" value="UniProtKB"/>
</dbReference>
<dbReference type="GO" id="GO:0004726">
    <property type="term" value="F:non-membrane spanning protein tyrosine phosphatase activity"/>
    <property type="evidence" value="ECO:0007669"/>
    <property type="project" value="InterPro"/>
</dbReference>
<dbReference type="GO" id="GO:0004721">
    <property type="term" value="F:phosphoprotein phosphatase activity"/>
    <property type="evidence" value="ECO:0000314"/>
    <property type="project" value="MGI"/>
</dbReference>
<dbReference type="GO" id="GO:0017124">
    <property type="term" value="F:SH3 domain binding"/>
    <property type="evidence" value="ECO:0007669"/>
    <property type="project" value="Ensembl"/>
</dbReference>
<dbReference type="GO" id="GO:0071364">
    <property type="term" value="P:cellular response to epidermal growth factor stimulus"/>
    <property type="evidence" value="ECO:0000250"/>
    <property type="project" value="UniProtKB"/>
</dbReference>
<dbReference type="GO" id="GO:0035335">
    <property type="term" value="P:peptidyl-tyrosine dephosphorylation"/>
    <property type="evidence" value="ECO:0000250"/>
    <property type="project" value="UniProtKB"/>
</dbReference>
<dbReference type="GO" id="GO:0042058">
    <property type="term" value="P:regulation of epidermal growth factor receptor signaling pathway"/>
    <property type="evidence" value="ECO:0000250"/>
    <property type="project" value="UniProtKB"/>
</dbReference>
<dbReference type="GO" id="GO:0042246">
    <property type="term" value="P:tissue regeneration"/>
    <property type="evidence" value="ECO:0007669"/>
    <property type="project" value="Ensembl"/>
</dbReference>
<dbReference type="CDD" id="cd14604">
    <property type="entry name" value="PTPc-N12"/>
    <property type="match status" value="1"/>
</dbReference>
<dbReference type="FunFam" id="3.90.190.10:FF:000045">
    <property type="entry name" value="Tyrosine-protein phosphatase non-receptor type 12"/>
    <property type="match status" value="1"/>
</dbReference>
<dbReference type="Gene3D" id="3.90.190.10">
    <property type="entry name" value="Protein tyrosine phosphatase superfamily"/>
    <property type="match status" value="1"/>
</dbReference>
<dbReference type="InterPro" id="IPR029021">
    <property type="entry name" value="Prot-tyrosine_phosphatase-like"/>
</dbReference>
<dbReference type="InterPro" id="IPR012266">
    <property type="entry name" value="PTN12"/>
</dbReference>
<dbReference type="InterPro" id="IPR047170">
    <property type="entry name" value="PTN12/18/22"/>
</dbReference>
<dbReference type="InterPro" id="IPR047251">
    <property type="entry name" value="PTN12_cat"/>
</dbReference>
<dbReference type="InterPro" id="IPR000242">
    <property type="entry name" value="PTP_cat"/>
</dbReference>
<dbReference type="InterPro" id="IPR016130">
    <property type="entry name" value="Tyr_Pase_AS"/>
</dbReference>
<dbReference type="InterPro" id="IPR003595">
    <property type="entry name" value="Tyr_Pase_cat"/>
</dbReference>
<dbReference type="InterPro" id="IPR000387">
    <property type="entry name" value="Tyr_Pase_dom"/>
</dbReference>
<dbReference type="PANTHER" id="PTHR45983">
    <property type="entry name" value="TYROSINE PHOSPHATSE N18, PUTATIVE-RELATED"/>
    <property type="match status" value="1"/>
</dbReference>
<dbReference type="PANTHER" id="PTHR45983:SF3">
    <property type="entry name" value="TYROSINE-PROTEIN PHOSPHATASE NON-RECEPTOR TYPE 12"/>
    <property type="match status" value="1"/>
</dbReference>
<dbReference type="Pfam" id="PF00102">
    <property type="entry name" value="Y_phosphatase"/>
    <property type="match status" value="1"/>
</dbReference>
<dbReference type="PIRSF" id="PIRSF000932">
    <property type="entry name" value="Tyr-Ptase_nr12"/>
    <property type="match status" value="1"/>
</dbReference>
<dbReference type="PRINTS" id="PR00700">
    <property type="entry name" value="PRTYPHPHTASE"/>
</dbReference>
<dbReference type="SMART" id="SM00194">
    <property type="entry name" value="PTPc"/>
    <property type="match status" value="1"/>
</dbReference>
<dbReference type="SMART" id="SM00404">
    <property type="entry name" value="PTPc_motif"/>
    <property type="match status" value="1"/>
</dbReference>
<dbReference type="SUPFAM" id="SSF52799">
    <property type="entry name" value="(Phosphotyrosine protein) phosphatases II"/>
    <property type="match status" value="1"/>
</dbReference>
<dbReference type="PROSITE" id="PS00383">
    <property type="entry name" value="TYR_PHOSPHATASE_1"/>
    <property type="match status" value="1"/>
</dbReference>
<dbReference type="PROSITE" id="PS50056">
    <property type="entry name" value="TYR_PHOSPHATASE_2"/>
    <property type="match status" value="1"/>
</dbReference>
<dbReference type="PROSITE" id="PS50055">
    <property type="entry name" value="TYR_PHOSPHATASE_PTP"/>
    <property type="match status" value="1"/>
</dbReference>
<evidence type="ECO:0000250" key="1"/>
<evidence type="ECO:0000250" key="2">
    <source>
        <dbReference type="UniProtKB" id="Q05209"/>
    </source>
</evidence>
<evidence type="ECO:0000255" key="3">
    <source>
        <dbReference type="PROSITE-ProRule" id="PRU00160"/>
    </source>
</evidence>
<evidence type="ECO:0000255" key="4">
    <source>
        <dbReference type="PROSITE-ProRule" id="PRU10044"/>
    </source>
</evidence>
<evidence type="ECO:0000256" key="5">
    <source>
        <dbReference type="SAM" id="MobiDB-lite"/>
    </source>
</evidence>
<evidence type="ECO:0000269" key="6">
    <source>
    </source>
</evidence>
<evidence type="ECO:0000269" key="7">
    <source>
    </source>
</evidence>
<evidence type="ECO:0000269" key="8">
    <source>
    </source>
</evidence>
<evidence type="ECO:0000269" key="9">
    <source>
    </source>
</evidence>
<evidence type="ECO:0000269" key="10">
    <source>
    </source>
</evidence>
<evidence type="ECO:0000269" key="11">
    <source>
    </source>
</evidence>
<evidence type="ECO:0000305" key="12"/>
<evidence type="ECO:0007744" key="13">
    <source>
    </source>
</evidence>
<evidence type="ECO:0007744" key="14">
    <source>
    </source>
</evidence>
<evidence type="ECO:0007744" key="15">
    <source>
    </source>
</evidence>
<evidence type="ECO:0007744" key="16">
    <source>
    </source>
</evidence>
<evidence type="ECO:0007744" key="17">
    <source>
    </source>
</evidence>
<reference key="1">
    <citation type="journal article" date="1992" name="Biochem. Biophys. Res. Commun.">
        <title>Differential expression of a novel murine non-receptor protein tyrosine phosphatase during differentiation of P19 embryonal carcinoma cells.</title>
        <authorList>
            <person name="den Hertog J."/>
            <person name="Pals C.E."/>
            <person name="Jonk L.J."/>
            <person name="Kruijer W."/>
        </authorList>
    </citation>
    <scope>NUCLEOTIDE SEQUENCE [MRNA]</scope>
</reference>
<reference key="2">
    <citation type="journal article" date="1992" name="Biochem. Biophys. Res. Commun.">
        <title>Cloning and characterization of a human cDNA encoding a novel putative cytoplasmic protein-tyrosine-phosphatase.</title>
        <authorList>
            <person name="Takekawa M."/>
            <person name="Itoh F."/>
            <person name="Hinoda Y."/>
            <person name="Arimura Y."/>
            <person name="Toyota M."/>
            <person name="Sekiya M."/>
            <person name="Adachi M."/>
            <person name="Imai K."/>
            <person name="Yachi A."/>
        </authorList>
    </citation>
    <scope>SEQUENCE REVISION TO 297-416</scope>
</reference>
<reference key="3">
    <citation type="journal article" date="1995" name="Biochem. J.">
        <title>Murine protein tyrosine phosphatase-PEST, a stable cytosolic protein tyrosine phosphatase.</title>
        <authorList>
            <person name="Charest A."/>
            <person name="Wagner J."/>
            <person name="Shen S.H."/>
            <person name="Tremblay M.L."/>
        </authorList>
    </citation>
    <scope>NUCLEOTIDE SEQUENCE [GENOMIC DNA]</scope>
    <scope>CATALYTIC ACTIVITY</scope>
    <scope>SUBCELLULAR LOCATION</scope>
    <source>
        <strain>BALB/cJ</strain>
    </source>
</reference>
<reference key="4">
    <citation type="journal article" date="2005" name="Science">
        <title>The transcriptional landscape of the mammalian genome.</title>
        <authorList>
            <person name="Carninci P."/>
            <person name="Kasukawa T."/>
            <person name="Katayama S."/>
            <person name="Gough J."/>
            <person name="Frith M.C."/>
            <person name="Maeda N."/>
            <person name="Oyama R."/>
            <person name="Ravasi T."/>
            <person name="Lenhard B."/>
            <person name="Wells C."/>
            <person name="Kodzius R."/>
            <person name="Shimokawa K."/>
            <person name="Bajic V.B."/>
            <person name="Brenner S.E."/>
            <person name="Batalov S."/>
            <person name="Forrest A.R."/>
            <person name="Zavolan M."/>
            <person name="Davis M.J."/>
            <person name="Wilming L.G."/>
            <person name="Aidinis V."/>
            <person name="Allen J.E."/>
            <person name="Ambesi-Impiombato A."/>
            <person name="Apweiler R."/>
            <person name="Aturaliya R.N."/>
            <person name="Bailey T.L."/>
            <person name="Bansal M."/>
            <person name="Baxter L."/>
            <person name="Beisel K.W."/>
            <person name="Bersano T."/>
            <person name="Bono H."/>
            <person name="Chalk A.M."/>
            <person name="Chiu K.P."/>
            <person name="Choudhary V."/>
            <person name="Christoffels A."/>
            <person name="Clutterbuck D.R."/>
            <person name="Crowe M.L."/>
            <person name="Dalla E."/>
            <person name="Dalrymple B.P."/>
            <person name="de Bono B."/>
            <person name="Della Gatta G."/>
            <person name="di Bernardo D."/>
            <person name="Down T."/>
            <person name="Engstrom P."/>
            <person name="Fagiolini M."/>
            <person name="Faulkner G."/>
            <person name="Fletcher C.F."/>
            <person name="Fukushima T."/>
            <person name="Furuno M."/>
            <person name="Futaki S."/>
            <person name="Gariboldi M."/>
            <person name="Georgii-Hemming P."/>
            <person name="Gingeras T.R."/>
            <person name="Gojobori T."/>
            <person name="Green R.E."/>
            <person name="Gustincich S."/>
            <person name="Harbers M."/>
            <person name="Hayashi Y."/>
            <person name="Hensch T.K."/>
            <person name="Hirokawa N."/>
            <person name="Hill D."/>
            <person name="Huminiecki L."/>
            <person name="Iacono M."/>
            <person name="Ikeo K."/>
            <person name="Iwama A."/>
            <person name="Ishikawa T."/>
            <person name="Jakt M."/>
            <person name="Kanapin A."/>
            <person name="Katoh M."/>
            <person name="Kawasawa Y."/>
            <person name="Kelso J."/>
            <person name="Kitamura H."/>
            <person name="Kitano H."/>
            <person name="Kollias G."/>
            <person name="Krishnan S.P."/>
            <person name="Kruger A."/>
            <person name="Kummerfeld S.K."/>
            <person name="Kurochkin I.V."/>
            <person name="Lareau L.F."/>
            <person name="Lazarevic D."/>
            <person name="Lipovich L."/>
            <person name="Liu J."/>
            <person name="Liuni S."/>
            <person name="McWilliam S."/>
            <person name="Madan Babu M."/>
            <person name="Madera M."/>
            <person name="Marchionni L."/>
            <person name="Matsuda H."/>
            <person name="Matsuzawa S."/>
            <person name="Miki H."/>
            <person name="Mignone F."/>
            <person name="Miyake S."/>
            <person name="Morris K."/>
            <person name="Mottagui-Tabar S."/>
            <person name="Mulder N."/>
            <person name="Nakano N."/>
            <person name="Nakauchi H."/>
            <person name="Ng P."/>
            <person name="Nilsson R."/>
            <person name="Nishiguchi S."/>
            <person name="Nishikawa S."/>
            <person name="Nori F."/>
            <person name="Ohara O."/>
            <person name="Okazaki Y."/>
            <person name="Orlando V."/>
            <person name="Pang K.C."/>
            <person name="Pavan W.J."/>
            <person name="Pavesi G."/>
            <person name="Pesole G."/>
            <person name="Petrovsky N."/>
            <person name="Piazza S."/>
            <person name="Reed J."/>
            <person name="Reid J.F."/>
            <person name="Ring B.Z."/>
            <person name="Ringwald M."/>
            <person name="Rost B."/>
            <person name="Ruan Y."/>
            <person name="Salzberg S.L."/>
            <person name="Sandelin A."/>
            <person name="Schneider C."/>
            <person name="Schoenbach C."/>
            <person name="Sekiguchi K."/>
            <person name="Semple C.A."/>
            <person name="Seno S."/>
            <person name="Sessa L."/>
            <person name="Sheng Y."/>
            <person name="Shibata Y."/>
            <person name="Shimada H."/>
            <person name="Shimada K."/>
            <person name="Silva D."/>
            <person name="Sinclair B."/>
            <person name="Sperling S."/>
            <person name="Stupka E."/>
            <person name="Sugiura K."/>
            <person name="Sultana R."/>
            <person name="Takenaka Y."/>
            <person name="Taki K."/>
            <person name="Tammoja K."/>
            <person name="Tan S.L."/>
            <person name="Tang S."/>
            <person name="Taylor M.S."/>
            <person name="Tegner J."/>
            <person name="Teichmann S.A."/>
            <person name="Ueda H.R."/>
            <person name="van Nimwegen E."/>
            <person name="Verardo R."/>
            <person name="Wei C.L."/>
            <person name="Yagi K."/>
            <person name="Yamanishi H."/>
            <person name="Zabarovsky E."/>
            <person name="Zhu S."/>
            <person name="Zimmer A."/>
            <person name="Hide W."/>
            <person name="Bult C."/>
            <person name="Grimmond S.M."/>
            <person name="Teasdale R.D."/>
            <person name="Liu E.T."/>
            <person name="Brusic V."/>
            <person name="Quackenbush J."/>
            <person name="Wahlestedt C."/>
            <person name="Mattick J.S."/>
            <person name="Hume D.A."/>
            <person name="Kai C."/>
            <person name="Sasaki D."/>
            <person name="Tomaru Y."/>
            <person name="Fukuda S."/>
            <person name="Kanamori-Katayama M."/>
            <person name="Suzuki M."/>
            <person name="Aoki J."/>
            <person name="Arakawa T."/>
            <person name="Iida J."/>
            <person name="Imamura K."/>
            <person name="Itoh M."/>
            <person name="Kato T."/>
            <person name="Kawaji H."/>
            <person name="Kawagashira N."/>
            <person name="Kawashima T."/>
            <person name="Kojima M."/>
            <person name="Kondo S."/>
            <person name="Konno H."/>
            <person name="Nakano K."/>
            <person name="Ninomiya N."/>
            <person name="Nishio T."/>
            <person name="Okada M."/>
            <person name="Plessy C."/>
            <person name="Shibata K."/>
            <person name="Shiraki T."/>
            <person name="Suzuki S."/>
            <person name="Tagami M."/>
            <person name="Waki K."/>
            <person name="Watahiki A."/>
            <person name="Okamura-Oho Y."/>
            <person name="Suzuki H."/>
            <person name="Kawai J."/>
            <person name="Hayashizaki Y."/>
        </authorList>
    </citation>
    <scope>NUCLEOTIDE SEQUENCE [LARGE SCALE MRNA]</scope>
    <source>
        <strain>NOD</strain>
    </source>
</reference>
<reference key="5">
    <citation type="submission" date="2005-09" db="EMBL/GenBank/DDBJ databases">
        <authorList>
            <person name="Mural R.J."/>
            <person name="Adams M.D."/>
            <person name="Myers E.W."/>
            <person name="Smith H.O."/>
            <person name="Venter J.C."/>
        </authorList>
    </citation>
    <scope>NUCLEOTIDE SEQUENCE [LARGE SCALE GENOMIC DNA]</scope>
</reference>
<reference key="6">
    <citation type="journal article" date="2004" name="Genome Res.">
        <title>The status, quality, and expansion of the NIH full-length cDNA project: the Mammalian Gene Collection (MGC).</title>
        <authorList>
            <consortium name="The MGC Project Team"/>
        </authorList>
    </citation>
    <scope>NUCLEOTIDE SEQUENCE [LARGE SCALE MRNA]</scope>
    <source>
        <strain>C57BL/6J</strain>
    </source>
</reference>
<reference key="7">
    <citation type="journal article" date="1999" name="J. Biol. Chem.">
        <title>Hic-5, a paxillin homologue, binds to the protein-tyrosine phosphatase PEST (PTP-PEST) through its LIM 3 domain.</title>
        <authorList>
            <person name="Nishiya N."/>
            <person name="Iwabuchi Y."/>
            <person name="Shibanuma M."/>
            <person name="Cote J.-F."/>
            <person name="Tremblay M.L."/>
            <person name="Nose K."/>
        </authorList>
    </citation>
    <scope>INTERACTION WITH TGFB1I1</scope>
</reference>
<reference key="8">
    <citation type="journal article" date="2002" name="J. Biol. Chem.">
        <title>PSTPIP is a substrate of PTP-PEST and serves as a scaffold guiding PTP-PEST toward a specific dephosphorylation of WASP.</title>
        <authorList>
            <person name="Cote J.-F."/>
            <person name="Chung P.L."/>
            <person name="Theberge J.-F."/>
            <person name="Halle M."/>
            <person name="Spencer S."/>
            <person name="Lasky L.A."/>
            <person name="Tremblay M.L."/>
        </authorList>
    </citation>
    <scope>INTERACTION WITH PSTPIP1</scope>
</reference>
<reference key="9">
    <citation type="journal article" date="2003" name="J. Bone Miner. Res.">
        <title>Leupaxin is a critical adaptor protein in the adhesion zone of the osteoclast.</title>
        <authorList>
            <person name="Gupta A."/>
            <person name="Lee B.S."/>
            <person name="Khadeer M.A."/>
            <person name="Tang Z."/>
            <person name="Chellaiah M."/>
            <person name="Abu-Amer Y."/>
            <person name="Goldknopf J."/>
            <person name="Hruska K.A."/>
        </authorList>
    </citation>
    <scope>SUBCELLULAR LOCATION</scope>
    <scope>INTERACTION WITH LPXN AND PTK2B/PYK2</scope>
</reference>
<reference key="10">
    <citation type="journal article" date="2004" name="Mol. Cell. Proteomics">
        <title>Phosphoproteomic analysis of the developing mouse brain.</title>
        <authorList>
            <person name="Ballif B.A."/>
            <person name="Villen J."/>
            <person name="Beausoleil S.A."/>
            <person name="Schwartz D."/>
            <person name="Gygi S.P."/>
        </authorList>
    </citation>
    <scope>PHOSPHORYLATION [LARGE SCALE ANALYSIS] AT SER-748</scope>
    <scope>IDENTIFICATION BY MASS SPECTROMETRY [LARGE SCALE ANALYSIS]</scope>
    <source>
        <tissue>Embryonic brain</tissue>
    </source>
</reference>
<reference key="11">
    <citation type="journal article" date="2005" name="Mol. Cell. Biochem.">
        <title>Leupaxin binds to PEST domain tyrosine phosphatase PEP.</title>
        <authorList>
            <person name="Watanabe N."/>
            <person name="Amano N."/>
            <person name="Ishizuka H."/>
            <person name="Mashima K."/>
        </authorList>
    </citation>
    <scope>INTERACTION WITH LPXN</scope>
</reference>
<reference key="12">
    <citation type="journal article" date="2006" name="Mech. Dev.">
        <title>Essential function of PTP-PEST during mouse embryonic vascularization, mesenchyme formation, neurogenesis and early liver development.</title>
        <authorList>
            <person name="Sirois J."/>
            <person name="Cote J.F."/>
            <person name="Charest A."/>
            <person name="Uetani N."/>
            <person name="Bourdeau A."/>
            <person name="Duncan S.A."/>
            <person name="Daniels E."/>
            <person name="Tremblay M.L."/>
        </authorList>
    </citation>
    <scope>DISRUPTION PHENOTYPE</scope>
    <scope>FUNCTION</scope>
</reference>
<reference key="13">
    <citation type="journal article" date="2007" name="Proc. Natl. Acad. Sci. U.S.A.">
        <title>Large-scale phosphorylation analysis of mouse liver.</title>
        <authorList>
            <person name="Villen J."/>
            <person name="Beausoleil S.A."/>
            <person name="Gerber S.A."/>
            <person name="Gygi S.P."/>
        </authorList>
    </citation>
    <scope>PHOSPHORYLATION [LARGE SCALE ANALYSIS] AT SER-550; SER-596; THR-598; SER-603; SER-606 AND SER-608</scope>
    <scope>IDENTIFICATION BY MASS SPECTROMETRY [LARGE SCALE ANALYSIS]</scope>
    <source>
        <tissue>Liver</tissue>
    </source>
</reference>
<reference key="14">
    <citation type="journal article" date="2009" name="Immunity">
        <title>The phagosomal proteome in interferon-gamma-activated macrophages.</title>
        <authorList>
            <person name="Trost M."/>
            <person name="English L."/>
            <person name="Lemieux S."/>
            <person name="Courcelles M."/>
            <person name="Desjardins M."/>
            <person name="Thibault P."/>
        </authorList>
    </citation>
    <scope>PHOSPHORYLATION [LARGE SCALE ANALYSIS] AT SER-331 AND SER-434</scope>
    <scope>IDENTIFICATION BY MASS SPECTROMETRY [LARGE SCALE ANALYSIS]</scope>
</reference>
<reference key="15">
    <citation type="journal article" date="2009" name="Mol. Cell. Proteomics">
        <title>Large scale localization of protein phosphorylation by use of electron capture dissociation mass spectrometry.</title>
        <authorList>
            <person name="Sweet S.M."/>
            <person name="Bailey C.M."/>
            <person name="Cunningham D.L."/>
            <person name="Heath J.K."/>
            <person name="Cooper H.J."/>
        </authorList>
    </citation>
    <scope>PHOSPHORYLATION [LARGE SCALE ANALYSIS] AT SER-331</scope>
    <scope>IDENTIFICATION BY MASS SPECTROMETRY [LARGE SCALE ANALYSIS]</scope>
    <source>
        <tissue>Embryonic fibroblast</tissue>
    </source>
</reference>
<reference key="16">
    <citation type="journal article" date="2010" name="Cell">
        <title>A tissue-specific atlas of mouse protein phosphorylation and expression.</title>
        <authorList>
            <person name="Huttlin E.L."/>
            <person name="Jedrychowski M.P."/>
            <person name="Elias J.E."/>
            <person name="Goswami T."/>
            <person name="Rad R."/>
            <person name="Beausoleil S.A."/>
            <person name="Villen J."/>
            <person name="Haas W."/>
            <person name="Sowa M.E."/>
            <person name="Gygi S.P."/>
        </authorList>
    </citation>
    <scope>PHOSPHORYLATION [LARGE SCALE ANALYSIS] AT SER-331; SER-550; SER-603; SER-606; SER-608 AND SER-748</scope>
    <scope>IDENTIFICATION BY MASS SPECTROMETRY [LARGE SCALE ANALYSIS]</scope>
    <source>
        <tissue>Brain</tissue>
        <tissue>Heart</tissue>
        <tissue>Kidney</tissue>
        <tissue>Liver</tissue>
        <tissue>Lung</tissue>
        <tissue>Pancreas</tissue>
        <tissue>Spleen</tissue>
        <tissue>Testis</tissue>
    </source>
</reference>
<feature type="chain" id="PRO_0000094772" description="Tyrosine-protein phosphatase non-receptor type 12">
    <location>
        <begin position="1"/>
        <end position="775"/>
    </location>
</feature>
<feature type="domain" description="Tyrosine-protein phosphatase" evidence="3">
    <location>
        <begin position="28"/>
        <end position="293"/>
    </location>
</feature>
<feature type="region of interest" description="Disordered" evidence="5">
    <location>
        <begin position="322"/>
        <end position="341"/>
    </location>
</feature>
<feature type="region of interest" description="Interaction with TGFB1I1" evidence="6">
    <location>
        <begin position="344"/>
        <end position="437"/>
    </location>
</feature>
<feature type="region of interest" description="Disordered" evidence="5">
    <location>
        <begin position="462"/>
        <end position="775"/>
    </location>
</feature>
<feature type="compositionally biased region" description="Polar residues" evidence="5">
    <location>
        <begin position="558"/>
        <end position="573"/>
    </location>
</feature>
<feature type="compositionally biased region" description="Low complexity" evidence="5">
    <location>
        <begin position="622"/>
        <end position="640"/>
    </location>
</feature>
<feature type="compositionally biased region" description="Basic and acidic residues" evidence="5">
    <location>
        <begin position="692"/>
        <end position="711"/>
    </location>
</feature>
<feature type="compositionally biased region" description="Basic and acidic residues" evidence="5">
    <location>
        <begin position="766"/>
        <end position="775"/>
    </location>
</feature>
<feature type="active site" description="Phosphocysteine intermediate" evidence="3 4">
    <location>
        <position position="231"/>
    </location>
</feature>
<feature type="binding site" evidence="1">
    <location>
        <position position="199"/>
    </location>
    <ligand>
        <name>substrate</name>
    </ligand>
</feature>
<feature type="binding site" evidence="1">
    <location>
        <begin position="231"/>
        <end position="237"/>
    </location>
    <ligand>
        <name>substrate</name>
    </ligand>
</feature>
<feature type="binding site" evidence="1">
    <location>
        <position position="278"/>
    </location>
    <ligand>
        <name>substrate</name>
    </ligand>
</feature>
<feature type="modified residue" description="N-acetylmethionine" evidence="2">
    <location>
        <position position="1"/>
    </location>
</feature>
<feature type="modified residue" description="Phosphoserine" evidence="2">
    <location>
        <position position="19"/>
    </location>
</feature>
<feature type="modified residue" description="Phosphoserine" evidence="15 16 17">
    <location>
        <position position="331"/>
    </location>
</feature>
<feature type="modified residue" description="Phosphoserine" evidence="16">
    <location>
        <position position="434"/>
    </location>
</feature>
<feature type="modified residue" description="Phosphoserine" evidence="2">
    <location>
        <position position="448"/>
    </location>
</feature>
<feature type="modified residue" description="Phosphoserine" evidence="2">
    <location>
        <position position="467"/>
    </location>
</feature>
<feature type="modified residue" description="Phosphothreonine" evidence="2">
    <location>
        <position position="519"/>
    </location>
</feature>
<feature type="modified residue" description="Phosphoserine" evidence="14 17">
    <location>
        <position position="550"/>
    </location>
</feature>
<feature type="modified residue" description="Phosphoserine" evidence="2">
    <location>
        <position position="567"/>
    </location>
</feature>
<feature type="modified residue" description="Phosphothreonine" evidence="2">
    <location>
        <position position="569"/>
    </location>
</feature>
<feature type="modified residue" description="Phosphoserine" evidence="14">
    <location>
        <position position="596"/>
    </location>
</feature>
<feature type="modified residue" description="Phosphothreonine" evidence="14">
    <location>
        <position position="598"/>
    </location>
</feature>
<feature type="modified residue" description="Phosphoserine" evidence="14 17">
    <location>
        <position position="603"/>
    </location>
</feature>
<feature type="modified residue" description="Phosphoserine" evidence="14 17">
    <location>
        <position position="606"/>
    </location>
</feature>
<feature type="modified residue" description="Phosphoserine" evidence="14 17">
    <location>
        <position position="608"/>
    </location>
</feature>
<feature type="modified residue" description="Phosphoserine" evidence="2">
    <location>
        <position position="613"/>
    </location>
</feature>
<feature type="modified residue" description="Phosphoserine" evidence="2">
    <location>
        <position position="673"/>
    </location>
</feature>
<feature type="modified residue" description="Phosphoserine" evidence="13 17">
    <location>
        <position position="748"/>
    </location>
</feature>
<feature type="sequence conflict" description="In Ref. 3; CAA60477." evidence="12" ref="3">
    <original>LA</original>
    <variation>FR</variation>
    <location>
        <begin position="110"/>
        <end position="111"/>
    </location>
</feature>
<feature type="sequence conflict" description="In Ref. 3; CAA60477." evidence="12" ref="3">
    <original>I</original>
    <variation>M</variation>
    <location>
        <position position="128"/>
    </location>
</feature>
<feature type="sequence conflict" description="In Ref. 1; CAA45037." evidence="12" ref="1">
    <original>K</original>
    <variation>N</variation>
    <location>
        <position position="296"/>
    </location>
</feature>
<feature type="sequence conflict" description="In Ref. 3; CAA60477." evidence="12" ref="3">
    <original>A</original>
    <variation>R</variation>
    <location>
        <position position="310"/>
    </location>
</feature>
<feature type="sequence conflict" description="In Ref. 1; CAA45037." evidence="12" ref="1">
    <original>KQDSP</original>
    <variation>DETS</variation>
    <location>
        <begin position="328"/>
        <end position="332"/>
    </location>
</feature>
<feature type="sequence conflict" description="In Ref. 1; CAA45037." evidence="12" ref="1">
    <original>W</original>
    <variation>V</variation>
    <location>
        <position position="380"/>
    </location>
</feature>
<feature type="sequence conflict" description="In Ref. 3; CAA60477." evidence="12" ref="3">
    <original>PM</original>
    <variation>QW</variation>
    <location>
        <begin position="414"/>
        <end position="415"/>
    </location>
</feature>
<feature type="sequence conflict" description="In Ref. 3; CAA60477." evidence="12" ref="3">
    <original>SD</original>
    <variation>WH</variation>
    <location>
        <begin position="606"/>
        <end position="607"/>
    </location>
</feature>
<feature type="sequence conflict" description="In Ref. 3; CAA60477." evidence="12" ref="3">
    <original>T</original>
    <variation>H</variation>
    <location>
        <position position="642"/>
    </location>
</feature>